<feature type="initiator methionine" description="Removed" evidence="18 21">
    <location>
        <position position="1"/>
    </location>
</feature>
<feature type="chain" id="PRO_0000234373" description="Lysine-specific demethylase 3B">
    <location>
        <begin position="2"/>
        <end position="1761"/>
    </location>
</feature>
<feature type="domain" description="JmjC" evidence="4">
    <location>
        <begin position="1498"/>
        <end position="1721"/>
    </location>
</feature>
<feature type="zinc finger region" description="C6-type" evidence="3">
    <location>
        <begin position="1031"/>
        <end position="1056"/>
    </location>
</feature>
<feature type="region of interest" description="Disordered" evidence="5">
    <location>
        <begin position="253"/>
        <end position="346"/>
    </location>
</feature>
<feature type="region of interest" description="Disordered" evidence="5">
    <location>
        <begin position="370"/>
        <end position="394"/>
    </location>
</feature>
<feature type="region of interest" description="Disordered" evidence="5">
    <location>
        <begin position="438"/>
        <end position="496"/>
    </location>
</feature>
<feature type="region of interest" description="Disordered" evidence="5">
    <location>
        <begin position="572"/>
        <end position="603"/>
    </location>
</feature>
<feature type="region of interest" description="Disordered" evidence="5">
    <location>
        <begin position="714"/>
        <end position="762"/>
    </location>
</feature>
<feature type="region of interest" description="Disordered" evidence="5">
    <location>
        <begin position="805"/>
        <end position="827"/>
    </location>
</feature>
<feature type="region of interest" description="Disordered" evidence="5">
    <location>
        <begin position="1142"/>
        <end position="1220"/>
    </location>
</feature>
<feature type="short sequence motif" description="LXXLL motif">
    <location>
        <begin position="1293"/>
        <end position="1297"/>
    </location>
</feature>
<feature type="compositionally biased region" description="Basic and acidic residues" evidence="5">
    <location>
        <begin position="298"/>
        <end position="309"/>
    </location>
</feature>
<feature type="compositionally biased region" description="Polar residues" evidence="5">
    <location>
        <begin position="380"/>
        <end position="392"/>
    </location>
</feature>
<feature type="compositionally biased region" description="Polar residues" evidence="5">
    <location>
        <begin position="453"/>
        <end position="468"/>
    </location>
</feature>
<feature type="compositionally biased region" description="Polar residues" evidence="5">
    <location>
        <begin position="477"/>
        <end position="495"/>
    </location>
</feature>
<feature type="compositionally biased region" description="Polar residues" evidence="5">
    <location>
        <begin position="723"/>
        <end position="745"/>
    </location>
</feature>
<feature type="compositionally biased region" description="Polar residues" evidence="5">
    <location>
        <begin position="1142"/>
        <end position="1161"/>
    </location>
</feature>
<feature type="compositionally biased region" description="Basic and acidic residues" evidence="5">
    <location>
        <begin position="1174"/>
        <end position="1193"/>
    </location>
</feature>
<feature type="compositionally biased region" description="Polar residues" evidence="5">
    <location>
        <begin position="1194"/>
        <end position="1204"/>
    </location>
</feature>
<feature type="binding site" evidence="4">
    <location>
        <position position="1560"/>
    </location>
    <ligand>
        <name>Fe cation</name>
        <dbReference type="ChEBI" id="CHEBI:24875"/>
        <note>catalytic</note>
    </ligand>
</feature>
<feature type="binding site" evidence="4">
    <location>
        <position position="1562"/>
    </location>
    <ligand>
        <name>Fe cation</name>
        <dbReference type="ChEBI" id="CHEBI:24875"/>
        <note>catalytic</note>
    </ligand>
</feature>
<feature type="binding site" evidence="4">
    <location>
        <position position="1689"/>
    </location>
    <ligand>
        <name>Fe cation</name>
        <dbReference type="ChEBI" id="CHEBI:24875"/>
        <note>catalytic</note>
    </ligand>
</feature>
<feature type="modified residue" description="N-acetylalanine" evidence="18 21">
    <location>
        <position position="2"/>
    </location>
</feature>
<feature type="modified residue" description="N6-acetyllysine" evidence="19">
    <location>
        <position position="361"/>
    </location>
</feature>
<feature type="modified residue" description="Phosphoserine" evidence="22">
    <location>
        <position position="492"/>
    </location>
</feature>
<feature type="modified residue" description="Phosphoserine" evidence="2">
    <location>
        <position position="546"/>
    </location>
</feature>
<feature type="modified residue" description="Phosphoserine" evidence="2">
    <location>
        <position position="556"/>
    </location>
</feature>
<feature type="modified residue" description="Phosphoserine" evidence="22">
    <location>
        <position position="560"/>
    </location>
</feature>
<feature type="modified residue" description="Phosphothreonine" evidence="22">
    <location>
        <position position="614"/>
    </location>
</feature>
<feature type="modified residue" description="Phosphoserine" evidence="22">
    <location>
        <position position="766"/>
    </location>
</feature>
<feature type="modified residue" description="Phosphoserine" evidence="17 20 22">
    <location>
        <position position="773"/>
    </location>
</feature>
<feature type="modified residue" description="Phosphoserine" evidence="22">
    <location>
        <position position="778"/>
    </location>
</feature>
<feature type="modified residue" description="Phosphoserine" evidence="17 20 22">
    <location>
        <position position="779"/>
    </location>
</feature>
<feature type="modified residue" description="Phosphoserine" evidence="16 20">
    <location>
        <position position="798"/>
    </location>
</feature>
<feature type="modified residue" description="Phosphoserine" evidence="22">
    <location>
        <position position="1253"/>
    </location>
</feature>
<feature type="modified residue" description="Phosphoserine" evidence="22">
    <location>
        <position position="1259"/>
    </location>
</feature>
<feature type="cross-link" description="Glycyl lysine isopeptide (Lys-Gly) (interchain with G-Cter in SUMO2)" evidence="23">
    <location>
        <position position="788"/>
    </location>
</feature>
<feature type="splice variant" id="VSP_018298" description="In isoform 3." evidence="14">
    <location>
        <begin position="1"/>
        <end position="1002"/>
    </location>
</feature>
<feature type="splice variant" id="VSP_018299" description="In isoform 2." evidence="13">
    <location>
        <begin position="1"/>
        <end position="344"/>
    </location>
</feature>
<feature type="splice variant" id="VSP_018300" description="In isoform 2." evidence="13">
    <original>TFVPQ</original>
    <variation>MGAME</variation>
    <location>
        <begin position="345"/>
        <end position="349"/>
    </location>
</feature>
<feature type="sequence variant" id="VAR_083997" description="In DIJOS." evidence="11">
    <location>
        <begin position="45"/>
        <end position="1761"/>
    </location>
</feature>
<feature type="sequence variant" id="VAR_083998" description="In DIJOS." evidence="11">
    <location>
        <begin position="93"/>
        <end position="1761"/>
    </location>
</feature>
<feature type="sequence variant" id="VAR_083999" description="In DIJOS." evidence="11">
    <original>W</original>
    <variation>R</variation>
    <location>
        <position position="117"/>
    </location>
</feature>
<feature type="sequence variant" id="VAR_026221" description="In dbSNP:rs6865472." evidence="6 8 9 12">
    <original>A</original>
    <variation>T</variation>
    <location>
        <position position="256"/>
    </location>
</feature>
<feature type="sequence variant" id="VAR_084000" description="In DIJOS; uncertain significance; dbSNP:rs1762257015." evidence="11">
    <original>D</original>
    <variation>G</variation>
    <location>
        <position position="336"/>
    </location>
</feature>
<feature type="sequence variant" id="VAR_084001" description="In DIJOS." evidence="11">
    <location>
        <begin position="827"/>
        <end position="1761"/>
    </location>
</feature>
<feature type="sequence variant" id="VAR_084002" description="In DIJOS; dbSNP:rs1334033128." evidence="11">
    <original>R</original>
    <variation>Q</variation>
    <location>
        <position position="943"/>
    </location>
</feature>
<feature type="sequence variant" id="VAR_084003" description="In DIJOS." evidence="11">
    <original>R</original>
    <variation>W</variation>
    <location>
        <position position="943"/>
    </location>
</feature>
<feature type="sequence variant" id="VAR_084004" description="In DIJOS." evidence="11">
    <original>R</original>
    <variation>Q</variation>
    <location>
        <position position="1028"/>
    </location>
</feature>
<feature type="sequence variant" id="VAR_084005" description="In DIJOS; dbSNP:rs1762639635." evidence="11">
    <original>D</original>
    <variation>V</variation>
    <location>
        <position position="1032"/>
    </location>
</feature>
<feature type="sequence variant" id="VAR_026222" description="In dbSNP:rs7706614.">
    <original>S</original>
    <variation>N</variation>
    <location>
        <position position="1201"/>
    </location>
</feature>
<feature type="sequence variant" id="VAR_084006" description="In DIJOS." evidence="11">
    <original>L</original>
    <variation>P</variation>
    <location>
        <position position="1509"/>
    </location>
</feature>
<feature type="sequence variant" id="VAR_084007" description="In DIJOS." evidence="11">
    <location>
        <begin position="1517"/>
        <end position="1761"/>
    </location>
</feature>
<feature type="sequence variant" id="VAR_084008" description="In DIJOS; uncertain significance." evidence="11">
    <original>Y</original>
    <variation>C</variation>
    <location>
        <position position="1544"/>
    </location>
</feature>
<feature type="sequence variant" id="VAR_084009" description="In DIJOS; uncertain significance; dbSNP:rs1763530961." evidence="11">
    <original>E</original>
    <variation>K</variation>
    <location>
        <position position="1731"/>
    </location>
</feature>
<feature type="sequence variant" id="VAR_084010" description="In DIJOS." evidence="11">
    <original>L</original>
    <variation>R</variation>
    <location>
        <position position="1734"/>
    </location>
</feature>
<feature type="sequence conflict" description="In Ref. 1; AAF63765." evidence="15" ref="1">
    <original>C</original>
    <variation>R</variation>
    <location>
        <position position="569"/>
    </location>
</feature>
<feature type="strand" evidence="24">
    <location>
        <begin position="1381"/>
        <end position="1385"/>
    </location>
</feature>
<feature type="helix" evidence="24">
    <location>
        <begin position="1386"/>
        <end position="1388"/>
    </location>
</feature>
<feature type="strand" evidence="24">
    <location>
        <begin position="1390"/>
        <end position="1394"/>
    </location>
</feature>
<feature type="helix" evidence="24">
    <location>
        <begin position="1401"/>
        <end position="1410"/>
    </location>
</feature>
<feature type="strand" evidence="24">
    <location>
        <begin position="1415"/>
        <end position="1417"/>
    </location>
</feature>
<feature type="helix" evidence="24">
    <location>
        <begin position="1420"/>
        <end position="1423"/>
    </location>
</feature>
<feature type="helix" evidence="24">
    <location>
        <begin position="1426"/>
        <end position="1429"/>
    </location>
</feature>
<feature type="helix" evidence="24">
    <location>
        <begin position="1431"/>
        <end position="1438"/>
    </location>
</feature>
<feature type="strand" evidence="24">
    <location>
        <begin position="1441"/>
        <end position="1447"/>
    </location>
</feature>
<feature type="turn" evidence="24">
    <location>
        <begin position="1448"/>
        <end position="1450"/>
    </location>
</feature>
<feature type="strand" evidence="24">
    <location>
        <begin position="1453"/>
        <end position="1458"/>
    </location>
</feature>
<feature type="helix" evidence="24">
    <location>
        <begin position="1459"/>
        <end position="1463"/>
    </location>
</feature>
<feature type="strand" evidence="24">
    <location>
        <begin position="1466"/>
        <end position="1468"/>
    </location>
</feature>
<feature type="helix" evidence="24">
    <location>
        <begin position="1469"/>
        <end position="1471"/>
    </location>
</feature>
<feature type="strand" evidence="24">
    <location>
        <begin position="1483"/>
        <end position="1485"/>
    </location>
</feature>
<feature type="strand" evidence="24">
    <location>
        <begin position="1487"/>
        <end position="1489"/>
    </location>
</feature>
<feature type="turn" evidence="24">
    <location>
        <begin position="1491"/>
        <end position="1493"/>
    </location>
</feature>
<feature type="helix" evidence="24">
    <location>
        <begin position="1494"/>
        <end position="1497"/>
    </location>
</feature>
<feature type="helix" evidence="24">
    <location>
        <begin position="1499"/>
        <end position="1506"/>
    </location>
</feature>
<feature type="helix" evidence="24">
    <location>
        <begin position="1512"/>
        <end position="1515"/>
    </location>
</feature>
<feature type="helix" evidence="24">
    <location>
        <begin position="1524"/>
        <end position="1526"/>
    </location>
</feature>
<feature type="strand" evidence="24">
    <location>
        <begin position="1539"/>
        <end position="1543"/>
    </location>
</feature>
<feature type="helix" evidence="24">
    <location>
        <begin position="1550"/>
        <end position="1553"/>
    </location>
</feature>
<feature type="strand" evidence="24">
    <location>
        <begin position="1556"/>
        <end position="1560"/>
    </location>
</feature>
<feature type="strand" evidence="24">
    <location>
        <begin position="1563"/>
        <end position="1574"/>
    </location>
</feature>
<feature type="strand" evidence="24">
    <location>
        <begin position="1577"/>
        <end position="1579"/>
    </location>
</feature>
<feature type="turn" evidence="25">
    <location>
        <begin position="1580"/>
        <end position="1582"/>
    </location>
</feature>
<feature type="helix" evidence="24">
    <location>
        <begin position="1583"/>
        <end position="1592"/>
    </location>
</feature>
<feature type="helix" evidence="24">
    <location>
        <begin position="1597"/>
        <end position="1604"/>
    </location>
</feature>
<feature type="strand" evidence="24">
    <location>
        <begin position="1610"/>
        <end position="1616"/>
    </location>
</feature>
<feature type="helix" evidence="24">
    <location>
        <begin position="1619"/>
        <end position="1621"/>
    </location>
</feature>
<feature type="helix" evidence="24">
    <location>
        <begin position="1622"/>
        <end position="1635"/>
    </location>
</feature>
<feature type="helix" evidence="24">
    <location>
        <begin position="1646"/>
        <end position="1649"/>
    </location>
</feature>
<feature type="helix" evidence="24">
    <location>
        <begin position="1656"/>
        <end position="1666"/>
    </location>
</feature>
<feature type="strand" evidence="24">
    <location>
        <begin position="1671"/>
        <end position="1676"/>
    </location>
</feature>
<feature type="strand" evidence="24">
    <location>
        <begin position="1680"/>
        <end position="1683"/>
    </location>
</feature>
<feature type="strand" evidence="24">
    <location>
        <begin position="1689"/>
        <end position="1704"/>
    </location>
</feature>
<feature type="helix" evidence="24">
    <location>
        <begin position="1707"/>
        <end position="1713"/>
    </location>
</feature>
<feature type="helix" evidence="24">
    <location>
        <begin position="1718"/>
        <end position="1724"/>
    </location>
</feature>
<reference key="1">
    <citation type="journal article" date="2000" name="Genomics">
        <title>cDNA cloning and genomic structure of three genes localized to human chromosome band 5q31 encoding potential nuclear proteins.</title>
        <authorList>
            <person name="Lai F."/>
            <person name="Godley L.A."/>
            <person name="Fernald A.A."/>
            <person name="Orelli B.J."/>
            <person name="Pamintuan L."/>
            <person name="Zhao N."/>
            <person name="Le Beau M.M."/>
        </authorList>
    </citation>
    <scope>NUCLEOTIDE SEQUENCE [MRNA] (ISOFORM 2)</scope>
    <scope>TISSUE SPECIFICITY</scope>
    <source>
        <tissue>Bone marrow</tissue>
    </source>
</reference>
<reference key="2">
    <citation type="journal article" date="2001" name="Oncogene">
        <title>A novel nuclear protein, 5qNCA (LOC51780) is a candidate for the myeloid leukemia tumor suppressor gene on chromosome 5 band q31.</title>
        <authorList>
            <person name="Hu Z."/>
            <person name="Gomes I."/>
            <person name="Horrigan S.K."/>
            <person name="Kravarusic J."/>
            <person name="Mar B."/>
            <person name="Arbieva Z."/>
            <person name="Chyna B."/>
            <person name="Fulton N."/>
            <person name="Edassery S."/>
            <person name="Raza A."/>
            <person name="Westbrook C.A."/>
        </authorList>
    </citation>
    <scope>NUCLEOTIDE SEQUENCE [MRNA] (ISOFORM 1)</scope>
    <scope>TISSUE SPECIFICITY</scope>
    <scope>VARIANT THR-256</scope>
</reference>
<reference key="3">
    <citation type="journal article" date="1999" name="DNA Res.">
        <title>Prediction of the coding sequences of unidentified human genes. XIV. The complete sequences of 100 new cDNA clones from brain which code for large proteins in vitro.</title>
        <authorList>
            <person name="Kikuno R."/>
            <person name="Nagase T."/>
            <person name="Ishikawa K."/>
            <person name="Hirosawa M."/>
            <person name="Miyajima N."/>
            <person name="Tanaka A."/>
            <person name="Kotani H."/>
            <person name="Nomura N."/>
            <person name="Ohara O."/>
        </authorList>
    </citation>
    <scope>NUCLEOTIDE SEQUENCE [LARGE SCALE MRNA] (ISOFORM 1)</scope>
    <scope>VARIANT THR-256</scope>
    <source>
        <tissue>Brain</tissue>
    </source>
</reference>
<reference key="4">
    <citation type="journal article" date="2002" name="DNA Res.">
        <title>Construction of expression-ready cDNA clones for KIAA genes: manual curation of 330 KIAA cDNA clones.</title>
        <authorList>
            <person name="Nakajima D."/>
            <person name="Okazaki N."/>
            <person name="Yamakawa H."/>
            <person name="Kikuno R."/>
            <person name="Ohara O."/>
            <person name="Nagase T."/>
        </authorList>
    </citation>
    <scope>SEQUENCE REVISION</scope>
</reference>
<reference key="5">
    <citation type="journal article" date="2004" name="Nature">
        <title>The DNA sequence and comparative analysis of human chromosome 5.</title>
        <authorList>
            <person name="Schmutz J."/>
            <person name="Martin J."/>
            <person name="Terry A."/>
            <person name="Couronne O."/>
            <person name="Grimwood J."/>
            <person name="Lowry S."/>
            <person name="Gordon L.A."/>
            <person name="Scott D."/>
            <person name="Xie G."/>
            <person name="Huang W."/>
            <person name="Hellsten U."/>
            <person name="Tran-Gyamfi M."/>
            <person name="She X."/>
            <person name="Prabhakar S."/>
            <person name="Aerts A."/>
            <person name="Altherr M."/>
            <person name="Bajorek E."/>
            <person name="Black S."/>
            <person name="Branscomb E."/>
            <person name="Caoile C."/>
            <person name="Challacombe J.F."/>
            <person name="Chan Y.M."/>
            <person name="Denys M."/>
            <person name="Detter J.C."/>
            <person name="Escobar J."/>
            <person name="Flowers D."/>
            <person name="Fotopulos D."/>
            <person name="Glavina T."/>
            <person name="Gomez M."/>
            <person name="Gonzales E."/>
            <person name="Goodstein D."/>
            <person name="Grigoriev I."/>
            <person name="Groza M."/>
            <person name="Hammon N."/>
            <person name="Hawkins T."/>
            <person name="Haydu L."/>
            <person name="Israni S."/>
            <person name="Jett J."/>
            <person name="Kadner K."/>
            <person name="Kimball H."/>
            <person name="Kobayashi A."/>
            <person name="Lopez F."/>
            <person name="Lou Y."/>
            <person name="Martinez D."/>
            <person name="Medina C."/>
            <person name="Morgan J."/>
            <person name="Nandkeshwar R."/>
            <person name="Noonan J.P."/>
            <person name="Pitluck S."/>
            <person name="Pollard M."/>
            <person name="Predki P."/>
            <person name="Priest J."/>
            <person name="Ramirez L."/>
            <person name="Retterer J."/>
            <person name="Rodriguez A."/>
            <person name="Rogers S."/>
            <person name="Salamov A."/>
            <person name="Salazar A."/>
            <person name="Thayer N."/>
            <person name="Tice H."/>
            <person name="Tsai M."/>
            <person name="Ustaszewska A."/>
            <person name="Vo N."/>
            <person name="Wheeler J."/>
            <person name="Wu K."/>
            <person name="Yang J."/>
            <person name="Dickson M."/>
            <person name="Cheng J.-F."/>
            <person name="Eichler E.E."/>
            <person name="Olsen A."/>
            <person name="Pennacchio L.A."/>
            <person name="Rokhsar D.S."/>
            <person name="Richardson P."/>
            <person name="Lucas S.M."/>
            <person name="Myers R.M."/>
            <person name="Rubin E.M."/>
        </authorList>
    </citation>
    <scope>NUCLEOTIDE SEQUENCE [LARGE SCALE GENOMIC DNA]</scope>
</reference>
<reference key="6">
    <citation type="submission" date="2005-09" db="EMBL/GenBank/DDBJ databases">
        <authorList>
            <person name="Mural R.J."/>
            <person name="Istrail S."/>
            <person name="Sutton G.G."/>
            <person name="Florea L."/>
            <person name="Halpern A.L."/>
            <person name="Mobarry C.M."/>
            <person name="Lippert R."/>
            <person name="Walenz B."/>
            <person name="Shatkay H."/>
            <person name="Dew I."/>
            <person name="Miller J.R."/>
            <person name="Flanigan M.J."/>
            <person name="Edwards N.J."/>
            <person name="Bolanos R."/>
            <person name="Fasulo D."/>
            <person name="Halldorsson B.V."/>
            <person name="Hannenhalli S."/>
            <person name="Turner R."/>
            <person name="Yooseph S."/>
            <person name="Lu F."/>
            <person name="Nusskern D.R."/>
            <person name="Shue B.C."/>
            <person name="Zheng X.H."/>
            <person name="Zhong F."/>
            <person name="Delcher A.L."/>
            <person name="Huson D.H."/>
            <person name="Kravitz S.A."/>
            <person name="Mouchard L."/>
            <person name="Reinert K."/>
            <person name="Remington K.A."/>
            <person name="Clark A.G."/>
            <person name="Waterman M.S."/>
            <person name="Eichler E.E."/>
            <person name="Adams M.D."/>
            <person name="Hunkapiller M.W."/>
            <person name="Myers E.W."/>
            <person name="Venter J.C."/>
        </authorList>
    </citation>
    <scope>NUCLEOTIDE SEQUENCE [LARGE SCALE GENOMIC DNA]</scope>
    <scope>VARIANT THR-256</scope>
</reference>
<reference key="7">
    <citation type="journal article" date="2004" name="Genome Res.">
        <title>The status, quality, and expansion of the NIH full-length cDNA project: the Mammalian Gene Collection (MGC).</title>
        <authorList>
            <consortium name="The MGC Project Team"/>
        </authorList>
    </citation>
    <scope>NUCLEOTIDE SEQUENCE [LARGE SCALE MRNA] (ISOFORMS 1 AND 3)</scope>
    <scope>VARIANT THR-256</scope>
    <source>
        <tissue>Brain</tissue>
        <tissue>Eye</tissue>
    </source>
</reference>
<reference key="8">
    <citation type="journal article" date="2006" name="Cell">
        <title>JHDM2A, a JmjC-containing H3K9 demethylase, facilitates transcription activation by androgen receptor.</title>
        <authorList>
            <person name="Yamane K."/>
            <person name="Toumazou C."/>
            <person name="Tsukada Y.I."/>
            <person name="Erdjument-Bromage H."/>
            <person name="Tempst P."/>
            <person name="Wong J."/>
            <person name="Zhang Y."/>
        </authorList>
    </citation>
    <scope>FUNCTION</scope>
    <scope>CATALYTIC ACTIVITY</scope>
</reference>
<reference key="9">
    <citation type="journal article" date="2006" name="Cell">
        <title>Global, in vivo, and site-specific phosphorylation dynamics in signaling networks.</title>
        <authorList>
            <person name="Olsen J.V."/>
            <person name="Blagoev B."/>
            <person name="Gnad F."/>
            <person name="Macek B."/>
            <person name="Kumar C."/>
            <person name="Mortensen P."/>
            <person name="Mann M."/>
        </authorList>
    </citation>
    <scope>PHOSPHORYLATION [LARGE SCALE ANALYSIS] AT SER-798</scope>
    <scope>IDENTIFICATION BY MASS SPECTROMETRY [LARGE SCALE ANALYSIS]</scope>
    <source>
        <tissue>Cervix carcinoma</tissue>
    </source>
</reference>
<reference key="10">
    <citation type="journal article" date="2008" name="Proc. Natl. Acad. Sci. U.S.A.">
        <title>A quantitative atlas of mitotic phosphorylation.</title>
        <authorList>
            <person name="Dephoure N."/>
            <person name="Zhou C."/>
            <person name="Villen J."/>
            <person name="Beausoleil S.A."/>
            <person name="Bakalarski C.E."/>
            <person name="Elledge S.J."/>
            <person name="Gygi S.P."/>
        </authorList>
    </citation>
    <scope>PHOSPHORYLATION [LARGE SCALE ANALYSIS] AT SER-773 AND SER-779</scope>
    <scope>IDENTIFICATION BY MASS SPECTROMETRY [LARGE SCALE ANALYSIS]</scope>
    <source>
        <tissue>Cervix carcinoma</tissue>
    </source>
</reference>
<reference key="11">
    <citation type="journal article" date="2009" name="Anal. Chem.">
        <title>Lys-N and trypsin cover complementary parts of the phosphoproteome in a refined SCX-based approach.</title>
        <authorList>
            <person name="Gauci S."/>
            <person name="Helbig A.O."/>
            <person name="Slijper M."/>
            <person name="Krijgsveld J."/>
            <person name="Heck A.J."/>
            <person name="Mohammed S."/>
        </authorList>
    </citation>
    <scope>ACETYLATION [LARGE SCALE ANALYSIS] AT ALA-2</scope>
    <scope>CLEAVAGE OF INITIATOR METHIONINE [LARGE SCALE ANALYSIS]</scope>
    <scope>IDENTIFICATION BY MASS SPECTROMETRY [LARGE SCALE ANALYSIS]</scope>
</reference>
<reference key="12">
    <citation type="journal article" date="2009" name="Sci. Signal.">
        <title>Quantitative phosphoproteomic analysis of T cell receptor signaling reveals system-wide modulation of protein-protein interactions.</title>
        <authorList>
            <person name="Mayya V."/>
            <person name="Lundgren D.H."/>
            <person name="Hwang S.-I."/>
            <person name="Rezaul K."/>
            <person name="Wu L."/>
            <person name="Eng J.K."/>
            <person name="Rodionov V."/>
            <person name="Han D.K."/>
        </authorList>
    </citation>
    <scope>IDENTIFICATION BY MASS SPECTROMETRY [LARGE SCALE ANALYSIS]</scope>
    <source>
        <tissue>Leukemic T-cell</tissue>
    </source>
</reference>
<reference key="13">
    <citation type="journal article" date="2009" name="Science">
        <title>Lysine acetylation targets protein complexes and co-regulates major cellular functions.</title>
        <authorList>
            <person name="Choudhary C."/>
            <person name="Kumar C."/>
            <person name="Gnad F."/>
            <person name="Nielsen M.L."/>
            <person name="Rehman M."/>
            <person name="Walther T.C."/>
            <person name="Olsen J.V."/>
            <person name="Mann M."/>
        </authorList>
    </citation>
    <scope>ACETYLATION [LARGE SCALE ANALYSIS] AT LYS-361</scope>
    <scope>IDENTIFICATION BY MASS SPECTROMETRY [LARGE SCALE ANALYSIS]</scope>
</reference>
<reference key="14">
    <citation type="journal article" date="2010" name="Sci. Signal.">
        <title>Quantitative phosphoproteomics reveals widespread full phosphorylation site occupancy during mitosis.</title>
        <authorList>
            <person name="Olsen J.V."/>
            <person name="Vermeulen M."/>
            <person name="Santamaria A."/>
            <person name="Kumar C."/>
            <person name="Miller M.L."/>
            <person name="Jensen L.J."/>
            <person name="Gnad F."/>
            <person name="Cox J."/>
            <person name="Jensen T.S."/>
            <person name="Nigg E.A."/>
            <person name="Brunak S."/>
            <person name="Mann M."/>
        </authorList>
    </citation>
    <scope>PHOSPHORYLATION [LARGE SCALE ANALYSIS] AT SER-773; SER-779 AND SER-798</scope>
    <scope>IDENTIFICATION BY MASS SPECTROMETRY [LARGE SCALE ANALYSIS]</scope>
    <source>
        <tissue>Cervix carcinoma</tissue>
    </source>
</reference>
<reference key="15">
    <citation type="journal article" date="2011" name="BMC Syst. Biol.">
        <title>Initial characterization of the human central proteome.</title>
        <authorList>
            <person name="Burkard T.R."/>
            <person name="Planyavsky M."/>
            <person name="Kaupe I."/>
            <person name="Breitwieser F.P."/>
            <person name="Buerckstuemmer T."/>
            <person name="Bennett K.L."/>
            <person name="Superti-Furga G."/>
            <person name="Colinge J."/>
        </authorList>
    </citation>
    <scope>IDENTIFICATION BY MASS SPECTROMETRY [LARGE SCALE ANALYSIS]</scope>
</reference>
<reference key="16">
    <citation type="journal article" date="2012" name="Proc. Natl. Acad. Sci. U.S.A.">
        <title>N-terminal acetylome analyses and functional insights of the N-terminal acetyltransferase NatB.</title>
        <authorList>
            <person name="Van Damme P."/>
            <person name="Lasa M."/>
            <person name="Polevoda B."/>
            <person name="Gazquez C."/>
            <person name="Elosegui-Artola A."/>
            <person name="Kim D.S."/>
            <person name="De Juan-Pardo E."/>
            <person name="Demeyer K."/>
            <person name="Hole K."/>
            <person name="Larrea E."/>
            <person name="Timmerman E."/>
            <person name="Prieto J."/>
            <person name="Arnesen T."/>
            <person name="Sherman F."/>
            <person name="Gevaert K."/>
            <person name="Aldabe R."/>
        </authorList>
    </citation>
    <scope>ACETYLATION [LARGE SCALE ANALYSIS] AT ALA-2</scope>
    <scope>CLEAVAGE OF INITIATOR METHIONINE [LARGE SCALE ANALYSIS]</scope>
    <scope>IDENTIFICATION BY MASS SPECTROMETRY [LARGE SCALE ANALYSIS]</scope>
</reference>
<reference key="17">
    <citation type="journal article" date="2013" name="J. Proteome Res.">
        <title>Toward a comprehensive characterization of a human cancer cell phosphoproteome.</title>
        <authorList>
            <person name="Zhou H."/>
            <person name="Di Palma S."/>
            <person name="Preisinger C."/>
            <person name="Peng M."/>
            <person name="Polat A.N."/>
            <person name="Heck A.J."/>
            <person name="Mohammed S."/>
        </authorList>
    </citation>
    <scope>PHOSPHORYLATION [LARGE SCALE ANALYSIS] AT SER-492; SER-560; THR-614; SER-766; SER-773; SER-778; SER-779; SER-1253 AND SER-1259</scope>
    <scope>IDENTIFICATION BY MASS SPECTROMETRY [LARGE SCALE ANALYSIS]</scope>
    <source>
        <tissue>Cervix carcinoma</tissue>
        <tissue>Erythroleukemia</tissue>
    </source>
</reference>
<reference key="18">
    <citation type="journal article" date="2017" name="Nat. Struct. Mol. Biol.">
        <title>Site-specific mapping of the human SUMO proteome reveals co-modification with phosphorylation.</title>
        <authorList>
            <person name="Hendriks I.A."/>
            <person name="Lyon D."/>
            <person name="Young C."/>
            <person name="Jensen L.J."/>
            <person name="Vertegaal A.C."/>
            <person name="Nielsen M.L."/>
        </authorList>
    </citation>
    <scope>SUMOYLATION [LARGE SCALE ANALYSIS] AT LYS-788</scope>
    <scope>IDENTIFICATION BY MASS SPECTROMETRY [LARGE SCALE ANALYSIS]</scope>
</reference>
<reference key="19">
    <citation type="journal article" date="2019" name="Am. J. Hum. Genet.">
        <title>De Novo and Inherited Pathogenic Variants in KDM3B Cause Intellectual Disability, Short Stature, and Facial Dysmorphism.</title>
        <authorList>
            <person name="Diets I.J."/>
            <person name="van der Donk R."/>
            <person name="Baltrunaite K."/>
            <person name="Waanders E."/>
            <person name="Reijnders M.R.F."/>
            <person name="Dingemans A.J.M."/>
            <person name="Pfundt R."/>
            <person name="Vulto-van Silfhout A.T."/>
            <person name="Wiel L."/>
            <person name="Gilissen C."/>
            <person name="Thevenon J."/>
            <person name="Perrin L."/>
            <person name="Afenjar A."/>
            <person name="Nava C."/>
            <person name="Keren B."/>
            <person name="Bartz S."/>
            <person name="Peri B."/>
            <person name="Beunders G."/>
            <person name="Verbeek N."/>
            <person name="van Gassen K."/>
            <person name="Thiffault I."/>
            <person name="Cadieux-Dion M."/>
            <person name="Huerta-Saenz L."/>
            <person name="Wagner M."/>
            <person name="Konstantopoulou V."/>
            <person name="Vodopiutz J."/>
            <person name="Griese M."/>
            <person name="Boel A."/>
            <person name="Callewaert B."/>
            <person name="Brunner H.G."/>
            <person name="Kleefstra T."/>
            <person name="Hoogerbrugge N."/>
            <person name="de Vries B.B.A."/>
            <person name="Hwa V."/>
            <person name="Dauber A."/>
            <person name="Hehir-Kwa J.Y."/>
            <person name="Kuiper R.P."/>
            <person name="Jongmans M.C.J."/>
        </authorList>
    </citation>
    <scope>INVOLVEMENT IN DIJOS</scope>
    <scope>VARIANTS DIJOS 45-ARG--SER-1761 DEL; 93-GLU--SER-1761 DEL; ARG-117; GLY-336; 827-GLN--SER-1761 DEL; GLN-943; TRP-943; GLN-1028; VAL-1032; PRO-1509; 1517-ARG--SER-1761 DEL; CYS-1544; LYS-1731 AND ARG-1734</scope>
</reference>
<protein>
    <recommendedName>
        <fullName>Lysine-specific demethylase 3B</fullName>
        <ecNumber evidence="10">1.14.11.65</ecNumber>
    </recommendedName>
    <alternativeName>
        <fullName>JmjC domain-containing histone demethylation protein 2B</fullName>
    </alternativeName>
    <alternativeName>
        <fullName>Jumonji domain-containing protein 1B</fullName>
    </alternativeName>
    <alternativeName>
        <fullName>Nuclear protein 5qNCA</fullName>
    </alternativeName>
    <alternativeName>
        <fullName evidence="15">[histone H3]-dimethyl-L-lysine(9) demethylase 3B</fullName>
    </alternativeName>
</protein>
<comment type="function">
    <text evidence="10">Histone demethylase that specifically demethylates 'Lys-9' of histone H3, thereby playing a central role in histone code. Demethylation of Lys residue generates formaldehyde and succinate. May have tumor suppressor activity.</text>
</comment>
<comment type="catalytic activity">
    <reaction evidence="10">
        <text>N(6),N(6)-dimethyl-L-lysyl(9)-[histone H3] + 2 2-oxoglutarate + 2 O2 = L-lysyl(9)-[histone H3] + 2 formaldehyde + 2 succinate + 2 CO2</text>
        <dbReference type="Rhea" id="RHEA:60188"/>
        <dbReference type="Rhea" id="RHEA-COMP:15541"/>
        <dbReference type="Rhea" id="RHEA-COMP:15546"/>
        <dbReference type="ChEBI" id="CHEBI:15379"/>
        <dbReference type="ChEBI" id="CHEBI:16526"/>
        <dbReference type="ChEBI" id="CHEBI:16810"/>
        <dbReference type="ChEBI" id="CHEBI:16842"/>
        <dbReference type="ChEBI" id="CHEBI:29969"/>
        <dbReference type="ChEBI" id="CHEBI:30031"/>
        <dbReference type="ChEBI" id="CHEBI:61976"/>
        <dbReference type="EC" id="1.14.11.65"/>
    </reaction>
</comment>
<comment type="cofactor">
    <cofactor evidence="1">
        <name>Fe(2+)</name>
        <dbReference type="ChEBI" id="CHEBI:29033"/>
    </cofactor>
    <text evidence="1">Binds 1 Fe(2+) ion per subunit.</text>
</comment>
<comment type="subcellular location">
    <subcellularLocation>
        <location evidence="1">Nucleus</location>
    </subcellularLocation>
</comment>
<comment type="alternative products">
    <event type="alternative splicing"/>
    <isoform>
        <id>Q7LBC6-1</id>
        <name>1</name>
        <sequence type="displayed"/>
    </isoform>
    <isoform>
        <id>Q7LBC6-2</id>
        <name>2</name>
        <sequence type="described" ref="VSP_018299 VSP_018300"/>
    </isoform>
    <isoform>
        <id>Q7LBC6-3</id>
        <name>3</name>
        <sequence type="described" ref="VSP_018298"/>
    </isoform>
</comment>
<comment type="tissue specificity">
    <text evidence="7 8">Ubiquitous. Highly expressed in placenta, skeletal muscle, kidney, heart and liver.</text>
</comment>
<comment type="domain">
    <text evidence="1">Leu-Xaa-Xaa-Leu-Leu (LXXLL) motifs are known to mediate the association with nuclear receptors.</text>
</comment>
<comment type="disease" evidence="11">
    <disease id="DI-05814">
        <name>Diets-Jongmans syndrome</name>
        <acronym>DIJOS</acronym>
        <description>An autosomal dominant disorder characterized by varying degrees of intellectual disability, developmental delay, short stature, and characteristic facial features such as a wide mouth, a pointed chin, long ears and a low columella.</description>
        <dbReference type="MIM" id="618846"/>
    </disease>
    <text>The disease is caused by variants affecting the gene represented in this entry.</text>
</comment>
<comment type="miscellaneous">
    <text>Its gene is located in the 5q region of the genome which is deleted in del(5q) interstitial deletion, a frequent deletion found in myeloid leukemias and myelodysplasias, suggesting that it may be a good candidate for the del(5q) tumor suppressor gene.</text>
</comment>
<comment type="similarity">
    <text evidence="15">Belongs to the JHDM2 histone demethylase family.</text>
</comment>
<comment type="sequence caution" evidence="15">
    <conflict type="erroneous initiation">
        <sequence resource="EMBL-CDS" id="BAA83034"/>
    </conflict>
    <text>Extended N-terminus.</text>
</comment>
<organism>
    <name type="scientific">Homo sapiens</name>
    <name type="common">Human</name>
    <dbReference type="NCBI Taxonomy" id="9606"/>
    <lineage>
        <taxon>Eukaryota</taxon>
        <taxon>Metazoa</taxon>
        <taxon>Chordata</taxon>
        <taxon>Craniata</taxon>
        <taxon>Vertebrata</taxon>
        <taxon>Euteleostomi</taxon>
        <taxon>Mammalia</taxon>
        <taxon>Eutheria</taxon>
        <taxon>Euarchontoglires</taxon>
        <taxon>Primates</taxon>
        <taxon>Haplorrhini</taxon>
        <taxon>Catarrhini</taxon>
        <taxon>Hominidae</taxon>
        <taxon>Homo</taxon>
    </lineage>
</organism>
<proteinExistence type="evidence at protein level"/>
<sequence>MADAAASPVGKRLLLLFADTAASASASAPAAAAASGDPGPALRTRAWRAGTVRAMSGAVPQDLAIFVEFDGCNWKQHSWVKVHAEEVIVLLLEGSLVWAPREDPVLLQGIRVSIAQWPALTFTPLVDKLGLGSVVPVEYLLDRELRFLSDANGLHLFQMGTDSQNQILLEHAALRETVNALISDQKLQEIFSRGPYSVQGHRVKIYQPEGEEGWLYGVVSHQDSITRLMEVSVTESGEIKSVDPRLIHVMLMDNSAPQSEGGTLKAVKSSKGKKKRESIEGKDGRRRKSASDSGCDPASKKLKGDRGEVDSNGSDGGEASRGPWKGGNASGEPGLDQRAKQPPSTFVPQINRNIRFATYTKENGRTLVVQDEPVGGDTPASFTPYSTATGQTPLAPEVGGAENKEAGKTLEQVGQGIVASAAVVTTASSTPNTVRISDTGLAAGTVPEKQKGSRSQASGENSRNSILASSGFGAPLPSSSQPLTFGSGRSQSNGVLATENKPLGFSFGCSSAQEAQKDTDLSKNLFFQCMSQTLPTSNYFTTVSESLADDSSSRDSFKQSLESLSSGLCKGRSVLGTDTKPGSKAGSSVDRKVPAESMPTLTPAFPRSLLNARTPENHENLFLQPPKLSREEPSNPFLAFVEKVEHSPFSSFASQASGSSSSATTVTSKVAPSWPESHSSADSASLAKKKPLFITTDSSKLVSGVLGSALTSGGPSLSAMGNGRSSSPTSSLTQPIEMPTLSSSPTEERPTVGPGQQDNPLLKTFSNVFGRHSGGFLSSPADFSQENKAPFEAVKRFSLDERSLACRQDSDSSTNSDLSDLSDSEEQLQAKTGLKGIPEHLMGKLGPNGERSAELLLGKSKGKQAPKGRPRTAPLKVGQSVLKDVSKVKKLKQSGEPFLQDGSCINVAPHLHKCRECRLERYRKFKEQEQDDSTVACRFFHFRRLIFTRKGVLRVEGFLSPQQSDPDAMNLWIPSSSLAEGIDLETSKYILANVGDQFCQLVMSEKEAMMMVEPHQKVAWKRAVRGVREMCDVCETTLFNIHWVCRKCGFGVCLDCYRLRKSRPRSETEEMGDEEVFSWLKCAKGQSHEPENLMPTQIIPGTALYNIGDMVHAARGKWGIKANCPCISRQNKSVLRPAVTNGMSQLPSINPSASSGNETTFSGGGGPAPVTTPEPDHVPKADSTDIRSEEPLKTDSSASNSNSELKAIRPPCPDTAPPSSALHWLADLATQKAKEETKEAGSLRSVLNKESHSPFGLDSFNSTAKVSPLTPKLFNSLLLGPTASNNKTEGSSLRDLLHSGPGKLPQTPLDTGIPFPPVFSTSSAGVKSKASLPNFLDHIIASVVENKKTSDASKRACNLTDTQKEVKEMVMGLNVLDPHTSHSWLCDGRLLCLHDPSNKNNWKIFRECWKQGQPVLVSGVHKKLKSELWKPEAFSQEFGDQDVDLVNCRNCAIISDVKVRDFWDGFEIICKRLRSEDGQPMVLKLKDWPPGEDFRDMMPTRFEDLMENLPLPEYTKRDGRLNLASRLPSYFVRPDLGPKMYNAYGLITAEDRRVGTTNLHLDVSDAVNVMVYVGIPIGEGAHDEEVLKTIDEGDADEVTKQRIHDGKEKPGALWHIYAAKDAEKIRELLRKVGEEQGQENPPDHDPIHDQSWYLDQTLRKRLYEEYGVQGWAIVQFLGDAVFIPAGAPHQVHNLYSCIKVAEDFVSPEHVKHCFRLTQEFRHLSNTHTNHEDKLQVKNIIYHAVKDAVGTLKAHESKLARS</sequence>
<gene>
    <name type="primary">KDM3B</name>
    <name type="synonym">C5orf7</name>
    <name type="synonym">JHDM2B</name>
    <name type="synonym">JMJD1B</name>
    <name type="synonym">KIAA1082</name>
</gene>
<name>KDM3B_HUMAN</name>
<dbReference type="EC" id="1.14.11.65" evidence="10"/>
<dbReference type="EMBL" id="AF251039">
    <property type="protein sequence ID" value="AAF63765.1"/>
    <property type="molecule type" value="mRNA"/>
</dbReference>
<dbReference type="EMBL" id="AF338242">
    <property type="protein sequence ID" value="AAK13499.1"/>
    <property type="molecule type" value="mRNA"/>
</dbReference>
<dbReference type="EMBL" id="AB029005">
    <property type="protein sequence ID" value="BAA83034.2"/>
    <property type="status" value="ALT_INIT"/>
    <property type="molecule type" value="mRNA"/>
</dbReference>
<dbReference type="EMBL" id="AC104116">
    <property type="status" value="NOT_ANNOTATED_CDS"/>
    <property type="molecule type" value="Genomic_DNA"/>
</dbReference>
<dbReference type="EMBL" id="AC113403">
    <property type="status" value="NOT_ANNOTATED_CDS"/>
    <property type="molecule type" value="Genomic_DNA"/>
</dbReference>
<dbReference type="EMBL" id="CH471062">
    <property type="protein sequence ID" value="EAW62141.1"/>
    <property type="molecule type" value="Genomic_DNA"/>
</dbReference>
<dbReference type="EMBL" id="BC000539">
    <property type="protein sequence ID" value="AAH00539.2"/>
    <property type="molecule type" value="mRNA"/>
</dbReference>
<dbReference type="EMBL" id="BC001202">
    <property type="protein sequence ID" value="AAH01202.1"/>
    <property type="molecule type" value="mRNA"/>
</dbReference>
<dbReference type="EMBL" id="BC146788">
    <property type="protein sequence ID" value="AAI46789.1"/>
    <property type="molecule type" value="mRNA"/>
</dbReference>
<dbReference type="CCDS" id="CCDS34242.1">
    <molecule id="Q7LBC6-1"/>
</dbReference>
<dbReference type="RefSeq" id="NP_057688.2">
    <molecule id="Q7LBC6-1"/>
    <property type="nucleotide sequence ID" value="NM_016604.3"/>
</dbReference>
<dbReference type="PDB" id="4C8D">
    <property type="method" value="X-ray"/>
    <property type="resolution" value="2.18 A"/>
    <property type="chains" value="A=1380-1720"/>
</dbReference>
<dbReference type="PDB" id="5R7X">
    <property type="method" value="X-ray"/>
    <property type="resolution" value="1.44 A"/>
    <property type="chains" value="A/B=1380-1728"/>
</dbReference>
<dbReference type="PDB" id="5RAA">
    <property type="method" value="X-ray"/>
    <property type="resolution" value="1.57 A"/>
    <property type="chains" value="A/B=1380-1728"/>
</dbReference>
<dbReference type="PDB" id="5RAB">
    <property type="method" value="X-ray"/>
    <property type="resolution" value="1.52 A"/>
    <property type="chains" value="A/B=1380-1728"/>
</dbReference>
<dbReference type="PDB" id="5RAC">
    <property type="method" value="X-ray"/>
    <property type="resolution" value="1.73 A"/>
    <property type="chains" value="A/B=1380-1728"/>
</dbReference>
<dbReference type="PDB" id="5RAD">
    <property type="method" value="X-ray"/>
    <property type="resolution" value="1.90 A"/>
    <property type="chains" value="A/B=1380-1728"/>
</dbReference>
<dbReference type="PDB" id="5RAE">
    <property type="method" value="X-ray"/>
    <property type="resolution" value="1.88 A"/>
    <property type="chains" value="A/B=1380-1728"/>
</dbReference>
<dbReference type="PDB" id="5RAF">
    <property type="method" value="X-ray"/>
    <property type="resolution" value="1.62 A"/>
    <property type="chains" value="A/B=1380-1728"/>
</dbReference>
<dbReference type="PDB" id="5RAG">
    <property type="method" value="X-ray"/>
    <property type="resolution" value="1.52 A"/>
    <property type="chains" value="A/B=1380-1728"/>
</dbReference>
<dbReference type="PDB" id="5RAH">
    <property type="method" value="X-ray"/>
    <property type="resolution" value="1.66 A"/>
    <property type="chains" value="A/B=1380-1728"/>
</dbReference>
<dbReference type="PDB" id="5RAI">
    <property type="method" value="X-ray"/>
    <property type="resolution" value="1.54 A"/>
    <property type="chains" value="A/B=1380-1728"/>
</dbReference>
<dbReference type="PDB" id="5RAJ">
    <property type="method" value="X-ray"/>
    <property type="resolution" value="1.61 A"/>
    <property type="chains" value="A/B=1380-1728"/>
</dbReference>
<dbReference type="PDB" id="5RAK">
    <property type="method" value="X-ray"/>
    <property type="resolution" value="1.69 A"/>
    <property type="chains" value="A/B=1380-1728"/>
</dbReference>
<dbReference type="PDB" id="5RAL">
    <property type="method" value="X-ray"/>
    <property type="resolution" value="1.68 A"/>
    <property type="chains" value="A/B=1380-1728"/>
</dbReference>
<dbReference type="PDB" id="5RAM">
    <property type="method" value="X-ray"/>
    <property type="resolution" value="2.05 A"/>
    <property type="chains" value="A/B=1380-1728"/>
</dbReference>
<dbReference type="PDB" id="5RAN">
    <property type="method" value="X-ray"/>
    <property type="resolution" value="1.95 A"/>
    <property type="chains" value="A/B=1380-1728"/>
</dbReference>
<dbReference type="PDB" id="5RAO">
    <property type="method" value="X-ray"/>
    <property type="resolution" value="1.59 A"/>
    <property type="chains" value="A/B=1380-1728"/>
</dbReference>
<dbReference type="PDB" id="5RAP">
    <property type="method" value="X-ray"/>
    <property type="resolution" value="1.90 A"/>
    <property type="chains" value="A/B=1380-1728"/>
</dbReference>
<dbReference type="PDB" id="5RAQ">
    <property type="method" value="X-ray"/>
    <property type="resolution" value="1.85 A"/>
    <property type="chains" value="A/B=1380-1728"/>
</dbReference>
<dbReference type="PDB" id="5RAR">
    <property type="method" value="X-ray"/>
    <property type="resolution" value="1.47 A"/>
    <property type="chains" value="A/B=1380-1728"/>
</dbReference>
<dbReference type="PDB" id="5RAS">
    <property type="method" value="X-ray"/>
    <property type="resolution" value="1.58 A"/>
    <property type="chains" value="A/B=1380-1728"/>
</dbReference>
<dbReference type="PDB" id="5RAU">
    <property type="method" value="X-ray"/>
    <property type="resolution" value="1.73 A"/>
    <property type="chains" value="A/B=1380-1728"/>
</dbReference>
<dbReference type="PDB" id="5RAV">
    <property type="method" value="X-ray"/>
    <property type="resolution" value="1.77 A"/>
    <property type="chains" value="A/B=1380-1728"/>
</dbReference>
<dbReference type="PDB" id="5RAW">
    <property type="method" value="X-ray"/>
    <property type="resolution" value="1.55 A"/>
    <property type="chains" value="A/B=1380-1728"/>
</dbReference>
<dbReference type="PDB" id="5RAX">
    <property type="method" value="X-ray"/>
    <property type="resolution" value="2.01 A"/>
    <property type="chains" value="A/B=1380-1728"/>
</dbReference>
<dbReference type="PDB" id="5RAY">
    <property type="method" value="X-ray"/>
    <property type="resolution" value="1.63 A"/>
    <property type="chains" value="A/B=1380-1728"/>
</dbReference>
<dbReference type="PDB" id="5RAZ">
    <property type="method" value="X-ray"/>
    <property type="resolution" value="1.81 A"/>
    <property type="chains" value="A/B=1380-1728"/>
</dbReference>
<dbReference type="PDB" id="5RB0">
    <property type="method" value="X-ray"/>
    <property type="resolution" value="1.95 A"/>
    <property type="chains" value="A/B=1380-1728"/>
</dbReference>
<dbReference type="PDB" id="5RB1">
    <property type="method" value="X-ray"/>
    <property type="resolution" value="1.76 A"/>
    <property type="chains" value="A/B=1380-1728"/>
</dbReference>
<dbReference type="PDB" id="5RB2">
    <property type="method" value="X-ray"/>
    <property type="resolution" value="1.52 A"/>
    <property type="chains" value="A/B=1380-1728"/>
</dbReference>
<dbReference type="PDB" id="5RB3">
    <property type="method" value="X-ray"/>
    <property type="resolution" value="1.53 A"/>
    <property type="chains" value="A/B=1380-1728"/>
</dbReference>
<dbReference type="PDB" id="5RB4">
    <property type="method" value="X-ray"/>
    <property type="resolution" value="1.55 A"/>
    <property type="chains" value="A/B=1380-1728"/>
</dbReference>
<dbReference type="PDB" id="5RB5">
    <property type="method" value="X-ray"/>
    <property type="resolution" value="1.51 A"/>
    <property type="chains" value="A/B=1380-1728"/>
</dbReference>
<dbReference type="PDB" id="5RB6">
    <property type="method" value="X-ray"/>
    <property type="resolution" value="1.63 A"/>
    <property type="chains" value="A/B=1380-1728"/>
</dbReference>
<dbReference type="PDB" id="5RB7">
    <property type="method" value="X-ray"/>
    <property type="resolution" value="1.57 A"/>
    <property type="chains" value="A/B=1380-1728"/>
</dbReference>
<dbReference type="PDB" id="6RBJ">
    <property type="method" value="X-ray"/>
    <property type="resolution" value="2.09 A"/>
    <property type="chains" value="A/B=1380-1728"/>
</dbReference>
<dbReference type="PDBsum" id="4C8D"/>
<dbReference type="PDBsum" id="5R7X"/>
<dbReference type="PDBsum" id="5RAA"/>
<dbReference type="PDBsum" id="5RAB"/>
<dbReference type="PDBsum" id="5RAC"/>
<dbReference type="PDBsum" id="5RAD"/>
<dbReference type="PDBsum" id="5RAE"/>
<dbReference type="PDBsum" id="5RAF"/>
<dbReference type="PDBsum" id="5RAG"/>
<dbReference type="PDBsum" id="5RAH"/>
<dbReference type="PDBsum" id="5RAI"/>
<dbReference type="PDBsum" id="5RAJ"/>
<dbReference type="PDBsum" id="5RAK"/>
<dbReference type="PDBsum" id="5RAL"/>
<dbReference type="PDBsum" id="5RAM"/>
<dbReference type="PDBsum" id="5RAN"/>
<dbReference type="PDBsum" id="5RAO"/>
<dbReference type="PDBsum" id="5RAP"/>
<dbReference type="PDBsum" id="5RAQ"/>
<dbReference type="PDBsum" id="5RAR"/>
<dbReference type="PDBsum" id="5RAS"/>
<dbReference type="PDBsum" id="5RAU"/>
<dbReference type="PDBsum" id="5RAV"/>
<dbReference type="PDBsum" id="5RAW"/>
<dbReference type="PDBsum" id="5RAX"/>
<dbReference type="PDBsum" id="5RAY"/>
<dbReference type="PDBsum" id="5RAZ"/>
<dbReference type="PDBsum" id="5RB0"/>
<dbReference type="PDBsum" id="5RB1"/>
<dbReference type="PDBsum" id="5RB2"/>
<dbReference type="PDBsum" id="5RB3"/>
<dbReference type="PDBsum" id="5RB4"/>
<dbReference type="PDBsum" id="5RB5"/>
<dbReference type="PDBsum" id="5RB6"/>
<dbReference type="PDBsum" id="5RB7"/>
<dbReference type="PDBsum" id="6RBJ"/>
<dbReference type="SMR" id="Q7LBC6"/>
<dbReference type="BioGRID" id="119727">
    <property type="interactions" value="110"/>
</dbReference>
<dbReference type="FunCoup" id="Q7LBC6">
    <property type="interactions" value="3107"/>
</dbReference>
<dbReference type="IntAct" id="Q7LBC6">
    <property type="interactions" value="71"/>
</dbReference>
<dbReference type="MINT" id="Q7LBC6"/>
<dbReference type="STRING" id="9606.ENSP00000326563"/>
<dbReference type="BindingDB" id="Q7LBC6"/>
<dbReference type="ChEMBL" id="CHEMBL3784906"/>
<dbReference type="GlyCosmos" id="Q7LBC6">
    <property type="glycosylation" value="22 sites, 2 glycans"/>
</dbReference>
<dbReference type="GlyGen" id="Q7LBC6">
    <property type="glycosylation" value="31 sites, 2 N-linked glycans (2 sites), 2 O-linked glycans (28 sites)"/>
</dbReference>
<dbReference type="iPTMnet" id="Q7LBC6"/>
<dbReference type="PhosphoSitePlus" id="Q7LBC6"/>
<dbReference type="BioMuta" id="KDM3B"/>
<dbReference type="DMDM" id="308153456"/>
<dbReference type="jPOST" id="Q7LBC6"/>
<dbReference type="MassIVE" id="Q7LBC6"/>
<dbReference type="PaxDb" id="9606-ENSP00000326563"/>
<dbReference type="PeptideAtlas" id="Q7LBC6"/>
<dbReference type="ProteomicsDB" id="68846">
    <molecule id="Q7LBC6-1"/>
</dbReference>
<dbReference type="ProteomicsDB" id="68847">
    <molecule id="Q7LBC6-2"/>
</dbReference>
<dbReference type="ProteomicsDB" id="68848">
    <molecule id="Q7LBC6-3"/>
</dbReference>
<dbReference type="Pumba" id="Q7LBC6"/>
<dbReference type="Antibodypedia" id="14936">
    <property type="antibodies" value="360 antibodies from 38 providers"/>
</dbReference>
<dbReference type="DNASU" id="51780"/>
<dbReference type="Ensembl" id="ENST00000314358.10">
    <molecule id="Q7LBC6-1"/>
    <property type="protein sequence ID" value="ENSP00000326563.5"/>
    <property type="gene ID" value="ENSG00000120733.15"/>
</dbReference>
<dbReference type="GeneID" id="51780"/>
<dbReference type="KEGG" id="hsa:51780"/>
<dbReference type="MANE-Select" id="ENST00000314358.10">
    <property type="protein sequence ID" value="ENSP00000326563.5"/>
    <property type="RefSeq nucleotide sequence ID" value="NM_016604.4"/>
    <property type="RefSeq protein sequence ID" value="NP_057688.3"/>
</dbReference>
<dbReference type="UCSC" id="uc003lcy.1">
    <molecule id="Q7LBC6-1"/>
    <property type="organism name" value="human"/>
</dbReference>
<dbReference type="AGR" id="HGNC:1337"/>
<dbReference type="CTD" id="51780"/>
<dbReference type="DisGeNET" id="51780"/>
<dbReference type="GeneCards" id="KDM3B"/>
<dbReference type="HGNC" id="HGNC:1337">
    <property type="gene designation" value="KDM3B"/>
</dbReference>
<dbReference type="HPA" id="ENSG00000120733">
    <property type="expression patterns" value="Low tissue specificity"/>
</dbReference>
<dbReference type="MalaCards" id="KDM3B"/>
<dbReference type="MIM" id="609373">
    <property type="type" value="gene"/>
</dbReference>
<dbReference type="MIM" id="618846">
    <property type="type" value="phenotype"/>
</dbReference>
<dbReference type="neXtProt" id="NX_Q7LBC6"/>
<dbReference type="OpenTargets" id="ENSG00000120733"/>
<dbReference type="Orphanet" id="633004">
    <property type="disease" value="KDM3B-related intellectual disability-facial dysmorphism-short stature syndrome"/>
</dbReference>
<dbReference type="PharmGKB" id="PA25918"/>
<dbReference type="VEuPathDB" id="HostDB:ENSG00000120733"/>
<dbReference type="eggNOG" id="KOG1356">
    <property type="taxonomic scope" value="Eukaryota"/>
</dbReference>
<dbReference type="GeneTree" id="ENSGT00940000158095"/>
<dbReference type="HOGENOM" id="CLU_002991_0_0_1"/>
<dbReference type="InParanoid" id="Q7LBC6"/>
<dbReference type="OMA" id="IHVVMDT"/>
<dbReference type="OrthoDB" id="1667110at2759"/>
<dbReference type="PAN-GO" id="Q7LBC6">
    <property type="GO annotations" value="7 GO annotations based on evolutionary models"/>
</dbReference>
<dbReference type="PhylomeDB" id="Q7LBC6"/>
<dbReference type="TreeFam" id="TF324723"/>
<dbReference type="BioCyc" id="MetaCyc:ENSG00000120733-MONOMER"/>
<dbReference type="BRENDA" id="1.14.11.65">
    <property type="organism ID" value="2681"/>
</dbReference>
<dbReference type="PathwayCommons" id="Q7LBC6"/>
<dbReference type="Reactome" id="R-HSA-3214842">
    <property type="pathway name" value="HDMs demethylate histones"/>
</dbReference>
<dbReference type="SignaLink" id="Q7LBC6"/>
<dbReference type="SIGNOR" id="Q7LBC6"/>
<dbReference type="BioGRID-ORCS" id="51780">
    <property type="hits" value="42 hits in 1196 CRISPR screens"/>
</dbReference>
<dbReference type="CD-CODE" id="91857CE7">
    <property type="entry name" value="Nucleolus"/>
</dbReference>
<dbReference type="ChiTaRS" id="KDM3B">
    <property type="organism name" value="human"/>
</dbReference>
<dbReference type="EvolutionaryTrace" id="Q7LBC6"/>
<dbReference type="GeneWiki" id="JMJD1B"/>
<dbReference type="GenomeRNAi" id="51780"/>
<dbReference type="Pharos" id="Q7LBC6">
    <property type="development level" value="Tbio"/>
</dbReference>
<dbReference type="PRO" id="PR:Q7LBC6"/>
<dbReference type="Proteomes" id="UP000005640">
    <property type="component" value="Chromosome 5"/>
</dbReference>
<dbReference type="RNAct" id="Q7LBC6">
    <property type="molecule type" value="protein"/>
</dbReference>
<dbReference type="Bgee" id="ENSG00000120733">
    <property type="expression patterns" value="Expressed in ventricular zone and 213 other cell types or tissues"/>
</dbReference>
<dbReference type="ExpressionAtlas" id="Q7LBC6">
    <property type="expression patterns" value="baseline and differential"/>
</dbReference>
<dbReference type="GO" id="GO:0000785">
    <property type="term" value="C:chromatin"/>
    <property type="evidence" value="ECO:0000318"/>
    <property type="project" value="GO_Central"/>
</dbReference>
<dbReference type="GO" id="GO:0000118">
    <property type="term" value="C:histone deacetylase complex"/>
    <property type="evidence" value="ECO:0000318"/>
    <property type="project" value="GO_Central"/>
</dbReference>
<dbReference type="GO" id="GO:0005654">
    <property type="term" value="C:nucleoplasm"/>
    <property type="evidence" value="ECO:0000314"/>
    <property type="project" value="HPA"/>
</dbReference>
<dbReference type="GO" id="GO:0016209">
    <property type="term" value="F:antioxidant activity"/>
    <property type="evidence" value="ECO:0007669"/>
    <property type="project" value="Ensembl"/>
</dbReference>
<dbReference type="GO" id="GO:0031490">
    <property type="term" value="F:chromatin DNA binding"/>
    <property type="evidence" value="ECO:0000318"/>
    <property type="project" value="GO_Central"/>
</dbReference>
<dbReference type="GO" id="GO:0032454">
    <property type="term" value="F:histone H3K9 demethylase activity"/>
    <property type="evidence" value="ECO:0000318"/>
    <property type="project" value="GO_Central"/>
</dbReference>
<dbReference type="GO" id="GO:0140683">
    <property type="term" value="F:histone H3K9me/H3K9me2 demethylase activity"/>
    <property type="evidence" value="ECO:0007669"/>
    <property type="project" value="UniProtKB-EC"/>
</dbReference>
<dbReference type="GO" id="GO:0003712">
    <property type="term" value="F:transcription coregulator activity"/>
    <property type="evidence" value="ECO:0000318"/>
    <property type="project" value="GO_Central"/>
</dbReference>
<dbReference type="GO" id="GO:0008270">
    <property type="term" value="F:zinc ion binding"/>
    <property type="evidence" value="ECO:0007669"/>
    <property type="project" value="UniProtKB-KW"/>
</dbReference>
<dbReference type="GO" id="GO:0006357">
    <property type="term" value="P:regulation of transcription by RNA polymerase II"/>
    <property type="evidence" value="ECO:0000318"/>
    <property type="project" value="GO_Central"/>
</dbReference>
<dbReference type="FunFam" id="2.60.120.650:FF:000004">
    <property type="entry name" value="Putative lysine-specific demethylase 3B"/>
    <property type="match status" value="1"/>
</dbReference>
<dbReference type="Gene3D" id="2.60.120.650">
    <property type="entry name" value="Cupin"/>
    <property type="match status" value="1"/>
</dbReference>
<dbReference type="InterPro" id="IPR054294">
    <property type="entry name" value="DUF7030"/>
</dbReference>
<dbReference type="InterPro" id="IPR045109">
    <property type="entry name" value="JHDM2-like"/>
</dbReference>
<dbReference type="InterPro" id="IPR003347">
    <property type="entry name" value="JmjC_dom"/>
</dbReference>
<dbReference type="InterPro" id="IPR054503">
    <property type="entry name" value="KDM3AB_Tudor"/>
</dbReference>
<dbReference type="InterPro" id="IPR054504">
    <property type="entry name" value="PWWP_KDM3B"/>
</dbReference>
<dbReference type="PANTHER" id="PTHR12549">
    <property type="entry name" value="JMJC DOMAIN-CONTAINING HISTONE DEMETHYLATION PROTEIN"/>
    <property type="match status" value="1"/>
</dbReference>
<dbReference type="PANTHER" id="PTHR12549:SF8">
    <property type="entry name" value="LYSINE-SPECIFIC DEMETHYLASE 3B"/>
    <property type="match status" value="1"/>
</dbReference>
<dbReference type="Pfam" id="PF22989">
    <property type="entry name" value="DUF7030"/>
    <property type="match status" value="1"/>
</dbReference>
<dbReference type="Pfam" id="PF02373">
    <property type="entry name" value="JmjC"/>
    <property type="match status" value="1"/>
</dbReference>
<dbReference type="Pfam" id="PF22988">
    <property type="entry name" value="PWWP_KDM3B"/>
    <property type="match status" value="1"/>
</dbReference>
<dbReference type="Pfam" id="PF22987">
    <property type="entry name" value="Tudor_KDM3B"/>
    <property type="match status" value="1"/>
</dbReference>
<dbReference type="SMART" id="SM00558">
    <property type="entry name" value="JmjC"/>
    <property type="match status" value="1"/>
</dbReference>
<dbReference type="SUPFAM" id="SSF51197">
    <property type="entry name" value="Clavaminate synthase-like"/>
    <property type="match status" value="1"/>
</dbReference>
<dbReference type="PROSITE" id="PS51184">
    <property type="entry name" value="JMJC"/>
    <property type="match status" value="1"/>
</dbReference>
<accession>Q7LBC6</accession>
<accession>A6H8X7</accession>
<accession>Q9BVH6</accession>
<accession>Q9BW93</accession>
<accession>Q9BZ52</accession>
<accession>Q9NYF4</accession>
<accession>Q9UPS0</accession>
<evidence type="ECO:0000250" key="1"/>
<evidence type="ECO:0000250" key="2">
    <source>
        <dbReference type="UniProtKB" id="Q6ZPY7"/>
    </source>
</evidence>
<evidence type="ECO:0000255" key="3"/>
<evidence type="ECO:0000255" key="4">
    <source>
        <dbReference type="PROSITE-ProRule" id="PRU00538"/>
    </source>
</evidence>
<evidence type="ECO:0000256" key="5">
    <source>
        <dbReference type="SAM" id="MobiDB-lite"/>
    </source>
</evidence>
<evidence type="ECO:0000269" key="6">
    <source>
    </source>
</evidence>
<evidence type="ECO:0000269" key="7">
    <source>
    </source>
</evidence>
<evidence type="ECO:0000269" key="8">
    <source>
    </source>
</evidence>
<evidence type="ECO:0000269" key="9">
    <source>
    </source>
</evidence>
<evidence type="ECO:0000269" key="10">
    <source>
    </source>
</evidence>
<evidence type="ECO:0000269" key="11">
    <source>
    </source>
</evidence>
<evidence type="ECO:0000269" key="12">
    <source ref="6"/>
</evidence>
<evidence type="ECO:0000303" key="13">
    <source>
    </source>
</evidence>
<evidence type="ECO:0000303" key="14">
    <source>
    </source>
</evidence>
<evidence type="ECO:0000305" key="15"/>
<evidence type="ECO:0007744" key="16">
    <source>
    </source>
</evidence>
<evidence type="ECO:0007744" key="17">
    <source>
    </source>
</evidence>
<evidence type="ECO:0007744" key="18">
    <source>
    </source>
</evidence>
<evidence type="ECO:0007744" key="19">
    <source>
    </source>
</evidence>
<evidence type="ECO:0007744" key="20">
    <source>
    </source>
</evidence>
<evidence type="ECO:0007744" key="21">
    <source>
    </source>
</evidence>
<evidence type="ECO:0007744" key="22">
    <source>
    </source>
</evidence>
<evidence type="ECO:0007744" key="23">
    <source>
    </source>
</evidence>
<evidence type="ECO:0007829" key="24">
    <source>
        <dbReference type="PDB" id="5R7X"/>
    </source>
</evidence>
<evidence type="ECO:0007829" key="25">
    <source>
        <dbReference type="PDB" id="5RAH"/>
    </source>
</evidence>
<keyword id="KW-0002">3D-structure</keyword>
<keyword id="KW-0007">Acetylation</keyword>
<keyword id="KW-0025">Alternative splicing</keyword>
<keyword id="KW-0156">Chromatin regulator</keyword>
<keyword id="KW-0223">Dioxygenase</keyword>
<keyword id="KW-0225">Disease variant</keyword>
<keyword id="KW-0242">Dwarfism</keyword>
<keyword id="KW-0991">Intellectual disability</keyword>
<keyword id="KW-0408">Iron</keyword>
<keyword id="KW-1017">Isopeptide bond</keyword>
<keyword id="KW-0479">Metal-binding</keyword>
<keyword id="KW-0539">Nucleus</keyword>
<keyword id="KW-0560">Oxidoreductase</keyword>
<keyword id="KW-0597">Phosphoprotein</keyword>
<keyword id="KW-1267">Proteomics identification</keyword>
<keyword id="KW-1185">Reference proteome</keyword>
<keyword id="KW-0804">Transcription</keyword>
<keyword id="KW-0805">Transcription regulation</keyword>
<keyword id="KW-0832">Ubl conjugation</keyword>
<keyword id="KW-0862">Zinc</keyword>
<keyword id="KW-0863">Zinc-finger</keyword>